<accession>B6IB62</accession>
<organism>
    <name type="scientific">Escherichia coli (strain SE11)</name>
    <dbReference type="NCBI Taxonomy" id="409438"/>
    <lineage>
        <taxon>Bacteria</taxon>
        <taxon>Pseudomonadati</taxon>
        <taxon>Pseudomonadota</taxon>
        <taxon>Gammaproteobacteria</taxon>
        <taxon>Enterobacterales</taxon>
        <taxon>Enterobacteriaceae</taxon>
        <taxon>Escherichia</taxon>
    </lineage>
</organism>
<gene>
    <name evidence="1" type="primary">rsxA</name>
    <name type="ordered locus">ECSE_1749</name>
</gene>
<comment type="function">
    <text evidence="1">Part of a membrane-bound complex that couples electron transfer with translocation of ions across the membrane. Required to maintain the reduced state of SoxR.</text>
</comment>
<comment type="subunit">
    <text evidence="1">The complex is composed of six subunits: RsxA, RsxB, RsxC, RsxD, RsxE and RsxG.</text>
</comment>
<comment type="subcellular location">
    <subcellularLocation>
        <location evidence="1">Cell inner membrane</location>
        <topology evidence="1">Multi-pass membrane protein</topology>
    </subcellularLocation>
</comment>
<comment type="similarity">
    <text evidence="1">Belongs to the NqrDE/RnfAE family.</text>
</comment>
<feature type="chain" id="PRO_1000191716" description="Ion-translocating oxidoreductase complex subunit A">
    <location>
        <begin position="1"/>
        <end position="193"/>
    </location>
</feature>
<feature type="transmembrane region" description="Helical" evidence="1">
    <location>
        <begin position="5"/>
        <end position="25"/>
    </location>
</feature>
<feature type="transmembrane region" description="Helical" evidence="1">
    <location>
        <begin position="39"/>
        <end position="59"/>
    </location>
</feature>
<feature type="transmembrane region" description="Helical" evidence="1">
    <location>
        <begin position="63"/>
        <end position="83"/>
    </location>
</feature>
<feature type="transmembrane region" description="Helical" evidence="1">
    <location>
        <begin position="102"/>
        <end position="122"/>
    </location>
</feature>
<feature type="transmembrane region" description="Helical" evidence="1">
    <location>
        <begin position="134"/>
        <end position="154"/>
    </location>
</feature>
<feature type="transmembrane region" description="Helical" evidence="1">
    <location>
        <begin position="171"/>
        <end position="191"/>
    </location>
</feature>
<protein>
    <recommendedName>
        <fullName evidence="1">Ion-translocating oxidoreductase complex subunit A</fullName>
        <ecNumber evidence="1">7.-.-.-</ecNumber>
    </recommendedName>
    <alternativeName>
        <fullName evidence="1">Rsx electron transport complex subunit A</fullName>
    </alternativeName>
</protein>
<reference key="1">
    <citation type="journal article" date="2008" name="DNA Res.">
        <title>Complete genome sequence and comparative analysis of the wild-type commensal Escherichia coli strain SE11 isolated from a healthy adult.</title>
        <authorList>
            <person name="Oshima K."/>
            <person name="Toh H."/>
            <person name="Ogura Y."/>
            <person name="Sasamoto H."/>
            <person name="Morita H."/>
            <person name="Park S.-H."/>
            <person name="Ooka T."/>
            <person name="Iyoda S."/>
            <person name="Taylor T.D."/>
            <person name="Hayashi T."/>
            <person name="Itoh K."/>
            <person name="Hattori M."/>
        </authorList>
    </citation>
    <scope>NUCLEOTIDE SEQUENCE [LARGE SCALE GENOMIC DNA]</scope>
    <source>
        <strain>SE11</strain>
    </source>
</reference>
<name>RSXA_ECOSE</name>
<keyword id="KW-0997">Cell inner membrane</keyword>
<keyword id="KW-1003">Cell membrane</keyword>
<keyword id="KW-0249">Electron transport</keyword>
<keyword id="KW-0472">Membrane</keyword>
<keyword id="KW-1278">Translocase</keyword>
<keyword id="KW-0812">Transmembrane</keyword>
<keyword id="KW-1133">Transmembrane helix</keyword>
<keyword id="KW-0813">Transport</keyword>
<proteinExistence type="inferred from homology"/>
<evidence type="ECO:0000255" key="1">
    <source>
        <dbReference type="HAMAP-Rule" id="MF_00459"/>
    </source>
</evidence>
<dbReference type="EC" id="7.-.-.-" evidence="1"/>
<dbReference type="EMBL" id="AP009240">
    <property type="protein sequence ID" value="BAG77273.1"/>
    <property type="molecule type" value="Genomic_DNA"/>
</dbReference>
<dbReference type="RefSeq" id="WP_000133193.1">
    <property type="nucleotide sequence ID" value="NC_011415.1"/>
</dbReference>
<dbReference type="SMR" id="B6IB62"/>
<dbReference type="GeneID" id="89516393"/>
<dbReference type="KEGG" id="ecy:ECSE_1749"/>
<dbReference type="HOGENOM" id="CLU_095255_1_0_6"/>
<dbReference type="Proteomes" id="UP000008199">
    <property type="component" value="Chromosome"/>
</dbReference>
<dbReference type="GO" id="GO:0005886">
    <property type="term" value="C:plasma membrane"/>
    <property type="evidence" value="ECO:0007669"/>
    <property type="project" value="UniProtKB-SubCell"/>
</dbReference>
<dbReference type="GO" id="GO:0022900">
    <property type="term" value="P:electron transport chain"/>
    <property type="evidence" value="ECO:0007669"/>
    <property type="project" value="UniProtKB-UniRule"/>
</dbReference>
<dbReference type="HAMAP" id="MF_00459">
    <property type="entry name" value="RsxA_RnfA"/>
    <property type="match status" value="1"/>
</dbReference>
<dbReference type="InterPro" id="IPR011293">
    <property type="entry name" value="Ion_transpt_RnfA/RsxA"/>
</dbReference>
<dbReference type="InterPro" id="IPR003667">
    <property type="entry name" value="NqrDE/RnfAE"/>
</dbReference>
<dbReference type="InterPro" id="IPR050133">
    <property type="entry name" value="NqrDE/RnfAE_oxidrdctase"/>
</dbReference>
<dbReference type="NCBIfam" id="NF003481">
    <property type="entry name" value="PRK05151.1"/>
    <property type="match status" value="1"/>
</dbReference>
<dbReference type="NCBIfam" id="TIGR01943">
    <property type="entry name" value="rnfA"/>
    <property type="match status" value="1"/>
</dbReference>
<dbReference type="PANTHER" id="PTHR30335">
    <property type="entry name" value="INTEGRAL MEMBRANE PROTEIN OF SOXR-REDUCING COMPLEX"/>
    <property type="match status" value="1"/>
</dbReference>
<dbReference type="PANTHER" id="PTHR30335:SF0">
    <property type="entry name" value="ION-TRANSLOCATING OXIDOREDUCTASE COMPLEX SUBUNIT A"/>
    <property type="match status" value="1"/>
</dbReference>
<dbReference type="Pfam" id="PF02508">
    <property type="entry name" value="Rnf-Nqr"/>
    <property type="match status" value="1"/>
</dbReference>
<dbReference type="PIRSF" id="PIRSF006102">
    <property type="entry name" value="NQR_DE"/>
    <property type="match status" value="1"/>
</dbReference>
<sequence>MTDYLLLFVGTVLVNNFVLVKFLGLCPFMGVSKKLETAMGMGLATTFVMTLASICAWLIDTWILIPLNLIYLRTLAFILVIAVVVQFTEMVVRKTSPVLYRLLGIFLPLITTNCAVLGVALLNINLGHNFLQSALYGFSAAVGFSLVMVLFAAIRERLAVADVPAPFRGNAIALITAGLMSLAFMGFSGLVKL</sequence>